<gene>
    <name evidence="1" type="primary">astA</name>
    <name type="ordered locus">SSPA1431</name>
</gene>
<reference key="1">
    <citation type="journal article" date="2009" name="BMC Genomics">
        <title>Pseudogene accumulation in the evolutionary histories of Salmonella enterica serovars Paratyphi A and Typhi.</title>
        <authorList>
            <person name="Holt K.E."/>
            <person name="Thomson N.R."/>
            <person name="Wain J."/>
            <person name="Langridge G.C."/>
            <person name="Hasan R."/>
            <person name="Bhutta Z.A."/>
            <person name="Quail M.A."/>
            <person name="Norbertczak H."/>
            <person name="Walker D."/>
            <person name="Simmonds M."/>
            <person name="White B."/>
            <person name="Bason N."/>
            <person name="Mungall K."/>
            <person name="Dougan G."/>
            <person name="Parkhill J."/>
        </authorList>
    </citation>
    <scope>NUCLEOTIDE SEQUENCE [LARGE SCALE GENOMIC DNA]</scope>
    <source>
        <strain>AKU_12601</strain>
    </source>
</reference>
<accession>B5BA71</accession>
<name>ASTA_SALPK</name>
<protein>
    <recommendedName>
        <fullName evidence="1">Arginine N-succinyltransferase</fullName>
        <shortName evidence="1">AST</shortName>
        <ecNumber evidence="1">2.3.1.109</ecNumber>
    </recommendedName>
    <alternativeName>
        <fullName evidence="1">AOST</fullName>
    </alternativeName>
</protein>
<sequence>MRVIRPVEHADIAALMQLAGKTGGGLTSLPANEATLAARIERALKTWSGELPKGEQGYVFVLEDSETGEVGGICAIEVAVGLNDPWYNYRVGTLVHASKELNVYNALPTLFLSNDHTGSSELCTLFLDPEWRKEGNGYLLSKSRFMFMAAFRDKFNEKVVAEMRGVIDEHGYSPFWQSLGKRFFSMDFSRADFLCGTGQKAFIAELMPKHPIYTHFLSEEAQAVIGEVHPQTAPARAVLEKEGFRYRHYIDIFDGGPTLECDIDRVRAIRKSRLVEVAEGQPAPGDYPACLVANENYHHFRAALVRADPQTSRLVLTAAQLDALKCRAGDHVRLVRLCAEEKTV</sequence>
<evidence type="ECO:0000255" key="1">
    <source>
        <dbReference type="HAMAP-Rule" id="MF_01171"/>
    </source>
</evidence>
<proteinExistence type="inferred from homology"/>
<organism>
    <name type="scientific">Salmonella paratyphi A (strain AKU_12601)</name>
    <dbReference type="NCBI Taxonomy" id="554290"/>
    <lineage>
        <taxon>Bacteria</taxon>
        <taxon>Pseudomonadati</taxon>
        <taxon>Pseudomonadota</taxon>
        <taxon>Gammaproteobacteria</taxon>
        <taxon>Enterobacterales</taxon>
        <taxon>Enterobacteriaceae</taxon>
        <taxon>Salmonella</taxon>
    </lineage>
</organism>
<keyword id="KW-0012">Acyltransferase</keyword>
<keyword id="KW-0056">Arginine metabolism</keyword>
<keyword id="KW-0808">Transferase</keyword>
<feature type="chain" id="PRO_1000137989" description="Arginine N-succinyltransferase">
    <location>
        <begin position="1"/>
        <end position="344"/>
    </location>
</feature>
<feature type="active site" description="Proton donor" evidence="1">
    <location>
        <position position="229"/>
    </location>
</feature>
<feature type="binding site" evidence="1">
    <location>
        <position position="125"/>
    </location>
    <ligand>
        <name>succinyl-CoA</name>
        <dbReference type="ChEBI" id="CHEBI:57292"/>
    </ligand>
</feature>
<dbReference type="EC" id="2.3.1.109" evidence="1"/>
<dbReference type="EMBL" id="FM200053">
    <property type="protein sequence ID" value="CAR59610.1"/>
    <property type="molecule type" value="Genomic_DNA"/>
</dbReference>
<dbReference type="RefSeq" id="WP_001263889.1">
    <property type="nucleotide sequence ID" value="NC_011147.1"/>
</dbReference>
<dbReference type="SMR" id="B5BA71"/>
<dbReference type="KEGG" id="sek:SSPA1431"/>
<dbReference type="HOGENOM" id="CLU_057655_0_0_6"/>
<dbReference type="UniPathway" id="UPA00185">
    <property type="reaction ID" value="UER00279"/>
</dbReference>
<dbReference type="Proteomes" id="UP000001869">
    <property type="component" value="Chromosome"/>
</dbReference>
<dbReference type="GO" id="GO:0008791">
    <property type="term" value="F:arginine N-succinyltransferase activity"/>
    <property type="evidence" value="ECO:0007669"/>
    <property type="project" value="UniProtKB-UniRule"/>
</dbReference>
<dbReference type="GO" id="GO:0019544">
    <property type="term" value="P:arginine catabolic process to glutamate"/>
    <property type="evidence" value="ECO:0007669"/>
    <property type="project" value="UniProtKB-UniRule"/>
</dbReference>
<dbReference type="GO" id="GO:0019545">
    <property type="term" value="P:arginine catabolic process to succinate"/>
    <property type="evidence" value="ECO:0007669"/>
    <property type="project" value="UniProtKB-UniRule"/>
</dbReference>
<dbReference type="Gene3D" id="2.40.40.20">
    <property type="match status" value="1"/>
</dbReference>
<dbReference type="Gene3D" id="3.40.630.30">
    <property type="match status" value="1"/>
</dbReference>
<dbReference type="HAMAP" id="MF_01171">
    <property type="entry name" value="AstA"/>
    <property type="match status" value="1"/>
</dbReference>
<dbReference type="InterPro" id="IPR016181">
    <property type="entry name" value="Acyl_CoA_acyltransferase"/>
</dbReference>
<dbReference type="InterPro" id="IPR007041">
    <property type="entry name" value="Arg_succinylTrfase_AstA/AruG"/>
</dbReference>
<dbReference type="InterPro" id="IPR017650">
    <property type="entry name" value="Arginine_N-succinylTrfase"/>
</dbReference>
<dbReference type="NCBIfam" id="TIGR03243">
    <property type="entry name" value="arg_catab_AOST"/>
    <property type="match status" value="1"/>
</dbReference>
<dbReference type="NCBIfam" id="TIGR03244">
    <property type="entry name" value="arg_catab_AstA"/>
    <property type="match status" value="1"/>
</dbReference>
<dbReference type="NCBIfam" id="NF007770">
    <property type="entry name" value="PRK10456.1"/>
    <property type="match status" value="1"/>
</dbReference>
<dbReference type="PANTHER" id="PTHR30420:SF1">
    <property type="entry name" value="ARGININE N-SUCCINYLTRANSFERASE"/>
    <property type="match status" value="1"/>
</dbReference>
<dbReference type="PANTHER" id="PTHR30420">
    <property type="entry name" value="N-SUCCINYLARGININE DIHYDROLASE"/>
    <property type="match status" value="1"/>
</dbReference>
<dbReference type="Pfam" id="PF04958">
    <property type="entry name" value="AstA"/>
    <property type="match status" value="1"/>
</dbReference>
<dbReference type="SUPFAM" id="SSF55729">
    <property type="entry name" value="Acyl-CoA N-acyltransferases (Nat)"/>
    <property type="match status" value="1"/>
</dbReference>
<comment type="function">
    <text evidence="1">Catalyzes the transfer of succinyl-CoA to arginine to produce N(2)-succinylarginine.</text>
</comment>
<comment type="catalytic activity">
    <reaction evidence="1">
        <text>succinyl-CoA + L-arginine = N(2)-succinyl-L-arginine + CoA + H(+)</text>
        <dbReference type="Rhea" id="RHEA:15185"/>
        <dbReference type="ChEBI" id="CHEBI:15378"/>
        <dbReference type="ChEBI" id="CHEBI:32682"/>
        <dbReference type="ChEBI" id="CHEBI:57287"/>
        <dbReference type="ChEBI" id="CHEBI:57292"/>
        <dbReference type="ChEBI" id="CHEBI:58241"/>
        <dbReference type="EC" id="2.3.1.109"/>
    </reaction>
</comment>
<comment type="pathway">
    <text evidence="1">Amino-acid degradation; L-arginine degradation via AST pathway; L-glutamate and succinate from L-arginine: step 1/5.</text>
</comment>
<comment type="similarity">
    <text evidence="1">Belongs to the arginine N-succinyltransferase family.</text>
</comment>